<comment type="function">
    <text evidence="1">Catalyzes the conversion of cytidine diphosphate diacylglycerol (CDP-DG) and glycerol 3-phosphate into phosphatidylglycerol. Essential for the synthesis of anionic phospholipids, thereby playing a role in balancing the ratio of zwitterionic and anionic phospholipids, which is thought to be important for normal membrane function.</text>
</comment>
<comment type="catalytic activity">
    <reaction evidence="1">
        <text>a CDP-1,2-diacyl-sn-glycerol + sn-glycerol 3-phosphate = a 1,2-diacyl-sn-glycero-3-phospho-(1'-sn-glycero-3'-phosphate) + CMP + H(+)</text>
        <dbReference type="Rhea" id="RHEA:12593"/>
        <dbReference type="ChEBI" id="CHEBI:15378"/>
        <dbReference type="ChEBI" id="CHEBI:57597"/>
        <dbReference type="ChEBI" id="CHEBI:58332"/>
        <dbReference type="ChEBI" id="CHEBI:60110"/>
        <dbReference type="ChEBI" id="CHEBI:60377"/>
        <dbReference type="EC" id="2.7.8.5"/>
    </reaction>
</comment>
<comment type="pathway">
    <text evidence="1">Phospholipid metabolism; phosphatidylglycerol biosynthesis; phosphatidylglycerol from CDP-diacylglycerol: step 1/2.</text>
</comment>
<comment type="subcellular location">
    <subcellularLocation>
        <location evidence="1">Cell inner membrane</location>
        <topology evidence="1">Multi-pass membrane protein</topology>
    </subcellularLocation>
</comment>
<comment type="similarity">
    <text evidence="1">Belongs to the CDP-alcohol phosphatidyltransferase class-I family.</text>
</comment>
<gene>
    <name evidence="1" type="primary">pgsA</name>
    <name type="ordered locus">YPTB1737</name>
</gene>
<sequence length="182" mass="20806">MQLNIPTWLTLFRVVLIPFFVLAFYLPFVWAPMVCAIIFVFAAATDWFDGFLARRWKQTTRFGAFLDPVADKVMVAVALVLVAEHYHSWWITLPAATMIAREIIISSLREWMAEIGKRSSVAVSWVGKVKTMAQMGSLVGLLWRPDHNVELASFVLLYIAAVLTFWSMFQYLNAAWSDLLEP</sequence>
<proteinExistence type="inferred from homology"/>
<protein>
    <recommendedName>
        <fullName evidence="1">CDP-diacylglycerol--glycerol-3-phosphate 3-phosphatidyltransferase</fullName>
        <ecNumber evidence="1">2.7.8.5</ecNumber>
    </recommendedName>
    <alternativeName>
        <fullName evidence="1">Phosphatidylglycerophosphate synthase</fullName>
        <shortName evidence="1">PGP synthase</shortName>
    </alternativeName>
</protein>
<dbReference type="EC" id="2.7.8.5" evidence="1"/>
<dbReference type="EMBL" id="BX936398">
    <property type="protein sequence ID" value="CAH20976.1"/>
    <property type="molecule type" value="Genomic_DNA"/>
</dbReference>
<dbReference type="RefSeq" id="WP_002220475.1">
    <property type="nucleotide sequence ID" value="NZ_CP009712.1"/>
</dbReference>
<dbReference type="SMR" id="Q66BN4"/>
<dbReference type="GeneID" id="96665312"/>
<dbReference type="KEGG" id="ypo:BZ17_762"/>
<dbReference type="KEGG" id="yps:YPTB1737"/>
<dbReference type="PATRIC" id="fig|273123.14.peg.807"/>
<dbReference type="UniPathway" id="UPA00084">
    <property type="reaction ID" value="UER00503"/>
</dbReference>
<dbReference type="Proteomes" id="UP000001011">
    <property type="component" value="Chromosome"/>
</dbReference>
<dbReference type="GO" id="GO:0005886">
    <property type="term" value="C:plasma membrane"/>
    <property type="evidence" value="ECO:0007669"/>
    <property type="project" value="UniProtKB-SubCell"/>
</dbReference>
<dbReference type="GO" id="GO:0008444">
    <property type="term" value="F:CDP-diacylglycerol-glycerol-3-phosphate 3-phosphatidyltransferase activity"/>
    <property type="evidence" value="ECO:0007669"/>
    <property type="project" value="UniProtKB-UniRule"/>
</dbReference>
<dbReference type="GO" id="GO:0006655">
    <property type="term" value="P:phosphatidylglycerol biosynthetic process"/>
    <property type="evidence" value="ECO:0007669"/>
    <property type="project" value="UniProtKB-UniRule"/>
</dbReference>
<dbReference type="FunFam" id="1.20.120.1760:FF:000001">
    <property type="entry name" value="CDP-diacylglycerol--glycerol-3-phosphate 3-phosphatidyltransferase"/>
    <property type="match status" value="1"/>
</dbReference>
<dbReference type="Gene3D" id="1.20.120.1760">
    <property type="match status" value="1"/>
</dbReference>
<dbReference type="HAMAP" id="MF_01437">
    <property type="entry name" value="PgsA"/>
    <property type="match status" value="1"/>
</dbReference>
<dbReference type="InterPro" id="IPR050324">
    <property type="entry name" value="CDP-alcohol_PTase-I"/>
</dbReference>
<dbReference type="InterPro" id="IPR000462">
    <property type="entry name" value="CDP-OH_P_trans"/>
</dbReference>
<dbReference type="InterPro" id="IPR043130">
    <property type="entry name" value="CDP-OH_PTrfase_TM_dom"/>
</dbReference>
<dbReference type="InterPro" id="IPR048254">
    <property type="entry name" value="CDP_ALCOHOL_P_TRANSF_CS"/>
</dbReference>
<dbReference type="InterPro" id="IPR023762">
    <property type="entry name" value="PGP_synthase_bac"/>
</dbReference>
<dbReference type="InterPro" id="IPR004570">
    <property type="entry name" value="Phosphatidylglycerol_P_synth"/>
</dbReference>
<dbReference type="NCBIfam" id="TIGR00560">
    <property type="entry name" value="pgsA"/>
    <property type="match status" value="1"/>
</dbReference>
<dbReference type="NCBIfam" id="NF008090">
    <property type="entry name" value="PRK10832.1"/>
    <property type="match status" value="1"/>
</dbReference>
<dbReference type="PANTHER" id="PTHR14269:SF62">
    <property type="entry name" value="CDP-DIACYLGLYCEROL--GLYCEROL-3-PHOSPHATE 3-PHOSPHATIDYLTRANSFERASE 1, CHLOROPLASTIC"/>
    <property type="match status" value="1"/>
</dbReference>
<dbReference type="PANTHER" id="PTHR14269">
    <property type="entry name" value="CDP-DIACYLGLYCEROL--GLYCEROL-3-PHOSPHATE 3-PHOSPHATIDYLTRANSFERASE-RELATED"/>
    <property type="match status" value="1"/>
</dbReference>
<dbReference type="Pfam" id="PF01066">
    <property type="entry name" value="CDP-OH_P_transf"/>
    <property type="match status" value="1"/>
</dbReference>
<dbReference type="PIRSF" id="PIRSF000847">
    <property type="entry name" value="Phos_ph_gly_syn"/>
    <property type="match status" value="1"/>
</dbReference>
<dbReference type="PROSITE" id="PS00379">
    <property type="entry name" value="CDP_ALCOHOL_P_TRANSF"/>
    <property type="match status" value="1"/>
</dbReference>
<name>PGSA_YERPS</name>
<accession>Q66BN4</accession>
<organism>
    <name type="scientific">Yersinia pseudotuberculosis serotype I (strain IP32953)</name>
    <dbReference type="NCBI Taxonomy" id="273123"/>
    <lineage>
        <taxon>Bacteria</taxon>
        <taxon>Pseudomonadati</taxon>
        <taxon>Pseudomonadota</taxon>
        <taxon>Gammaproteobacteria</taxon>
        <taxon>Enterobacterales</taxon>
        <taxon>Yersiniaceae</taxon>
        <taxon>Yersinia</taxon>
    </lineage>
</organism>
<evidence type="ECO:0000255" key="1">
    <source>
        <dbReference type="HAMAP-Rule" id="MF_01437"/>
    </source>
</evidence>
<feature type="chain" id="PRO_0000239136" description="CDP-diacylglycerol--glycerol-3-phosphate 3-phosphatidyltransferase">
    <location>
        <begin position="1"/>
        <end position="182"/>
    </location>
</feature>
<feature type="topological domain" description="Cytoplasmic" evidence="1">
    <location>
        <begin position="1"/>
        <end position="12"/>
    </location>
</feature>
<feature type="transmembrane region" description="Helical" evidence="1">
    <location>
        <begin position="13"/>
        <end position="37"/>
    </location>
</feature>
<feature type="topological domain" description="Periplasmic" evidence="1">
    <location>
        <begin position="38"/>
        <end position="60"/>
    </location>
</feature>
<feature type="transmembrane region" description="Helical" evidence="1">
    <location>
        <begin position="61"/>
        <end position="81"/>
    </location>
</feature>
<feature type="topological domain" description="Cytoplasmic" evidence="1">
    <location>
        <begin position="82"/>
        <end position="86"/>
    </location>
</feature>
<feature type="transmembrane region" description="Helical" evidence="1">
    <location>
        <begin position="87"/>
        <end position="107"/>
    </location>
</feature>
<feature type="topological domain" description="Periplasmic" evidence="1">
    <location>
        <begin position="108"/>
        <end position="145"/>
    </location>
</feature>
<feature type="transmembrane region" description="Helical" evidence="1">
    <location>
        <begin position="146"/>
        <end position="168"/>
    </location>
</feature>
<feature type="topological domain" description="Cytoplasmic" evidence="1">
    <location>
        <begin position="169"/>
        <end position="181"/>
    </location>
</feature>
<keyword id="KW-0997">Cell inner membrane</keyword>
<keyword id="KW-1003">Cell membrane</keyword>
<keyword id="KW-0444">Lipid biosynthesis</keyword>
<keyword id="KW-0443">Lipid metabolism</keyword>
<keyword id="KW-0472">Membrane</keyword>
<keyword id="KW-0594">Phospholipid biosynthesis</keyword>
<keyword id="KW-1208">Phospholipid metabolism</keyword>
<keyword id="KW-0808">Transferase</keyword>
<keyword id="KW-0812">Transmembrane</keyword>
<keyword id="KW-1133">Transmembrane helix</keyword>
<reference key="1">
    <citation type="journal article" date="2004" name="Proc. Natl. Acad. Sci. U.S.A.">
        <title>Insights into the evolution of Yersinia pestis through whole-genome comparison with Yersinia pseudotuberculosis.</title>
        <authorList>
            <person name="Chain P.S.G."/>
            <person name="Carniel E."/>
            <person name="Larimer F.W."/>
            <person name="Lamerdin J."/>
            <person name="Stoutland P.O."/>
            <person name="Regala W.M."/>
            <person name="Georgescu A.M."/>
            <person name="Vergez L.M."/>
            <person name="Land M.L."/>
            <person name="Motin V.L."/>
            <person name="Brubaker R.R."/>
            <person name="Fowler J."/>
            <person name="Hinnebusch J."/>
            <person name="Marceau M."/>
            <person name="Medigue C."/>
            <person name="Simonet M."/>
            <person name="Chenal-Francisque V."/>
            <person name="Souza B."/>
            <person name="Dacheux D."/>
            <person name="Elliott J.M."/>
            <person name="Derbise A."/>
            <person name="Hauser L.J."/>
            <person name="Garcia E."/>
        </authorList>
    </citation>
    <scope>NUCLEOTIDE SEQUENCE [LARGE SCALE GENOMIC DNA]</scope>
    <source>
        <strain>IP32953</strain>
    </source>
</reference>